<reference key="1">
    <citation type="journal article" date="2011" name="J. Bacteriol.">
        <title>Complete genome sequence of the plant growth-promoting endophyte Burkholderia phytofirmans strain PsJN.</title>
        <authorList>
            <person name="Weilharter A."/>
            <person name="Mitter B."/>
            <person name="Shin M.V."/>
            <person name="Chain P.S."/>
            <person name="Nowak J."/>
            <person name="Sessitsch A."/>
        </authorList>
    </citation>
    <scope>NUCLEOTIDE SEQUENCE [LARGE SCALE GENOMIC DNA]</scope>
    <source>
        <strain>DSM 17436 / LMG 22146 / PsJN</strain>
    </source>
</reference>
<feature type="chain" id="PRO_0000353314" description="DNA-directed RNA polymerase subunit beta'">
    <location>
        <begin position="1"/>
        <end position="1412"/>
    </location>
</feature>
<feature type="region of interest" description="Disordered" evidence="2">
    <location>
        <begin position="1391"/>
        <end position="1412"/>
    </location>
</feature>
<feature type="binding site" evidence="1">
    <location>
        <position position="70"/>
    </location>
    <ligand>
        <name>Zn(2+)</name>
        <dbReference type="ChEBI" id="CHEBI:29105"/>
        <label>1</label>
    </ligand>
</feature>
<feature type="binding site" evidence="1">
    <location>
        <position position="72"/>
    </location>
    <ligand>
        <name>Zn(2+)</name>
        <dbReference type="ChEBI" id="CHEBI:29105"/>
        <label>1</label>
    </ligand>
</feature>
<feature type="binding site" evidence="1">
    <location>
        <position position="85"/>
    </location>
    <ligand>
        <name>Zn(2+)</name>
        <dbReference type="ChEBI" id="CHEBI:29105"/>
        <label>1</label>
    </ligand>
</feature>
<feature type="binding site" evidence="1">
    <location>
        <position position="88"/>
    </location>
    <ligand>
        <name>Zn(2+)</name>
        <dbReference type="ChEBI" id="CHEBI:29105"/>
        <label>1</label>
    </ligand>
</feature>
<feature type="binding site" evidence="1">
    <location>
        <position position="460"/>
    </location>
    <ligand>
        <name>Mg(2+)</name>
        <dbReference type="ChEBI" id="CHEBI:18420"/>
    </ligand>
</feature>
<feature type="binding site" evidence="1">
    <location>
        <position position="462"/>
    </location>
    <ligand>
        <name>Mg(2+)</name>
        <dbReference type="ChEBI" id="CHEBI:18420"/>
    </ligand>
</feature>
<feature type="binding site" evidence="1">
    <location>
        <position position="464"/>
    </location>
    <ligand>
        <name>Mg(2+)</name>
        <dbReference type="ChEBI" id="CHEBI:18420"/>
    </ligand>
</feature>
<feature type="binding site" evidence="1">
    <location>
        <position position="819"/>
    </location>
    <ligand>
        <name>Zn(2+)</name>
        <dbReference type="ChEBI" id="CHEBI:29105"/>
        <label>2</label>
    </ligand>
</feature>
<feature type="binding site" evidence="1">
    <location>
        <position position="893"/>
    </location>
    <ligand>
        <name>Zn(2+)</name>
        <dbReference type="ChEBI" id="CHEBI:29105"/>
        <label>2</label>
    </ligand>
</feature>
<feature type="binding site" evidence="1">
    <location>
        <position position="900"/>
    </location>
    <ligand>
        <name>Zn(2+)</name>
        <dbReference type="ChEBI" id="CHEBI:29105"/>
        <label>2</label>
    </ligand>
</feature>
<feature type="binding site" evidence="1">
    <location>
        <position position="903"/>
    </location>
    <ligand>
        <name>Zn(2+)</name>
        <dbReference type="ChEBI" id="CHEBI:29105"/>
        <label>2</label>
    </ligand>
</feature>
<organism>
    <name type="scientific">Paraburkholderia phytofirmans (strain DSM 17436 / LMG 22146 / PsJN)</name>
    <name type="common">Burkholderia phytofirmans</name>
    <dbReference type="NCBI Taxonomy" id="398527"/>
    <lineage>
        <taxon>Bacteria</taxon>
        <taxon>Pseudomonadati</taxon>
        <taxon>Pseudomonadota</taxon>
        <taxon>Betaproteobacteria</taxon>
        <taxon>Burkholderiales</taxon>
        <taxon>Burkholderiaceae</taxon>
        <taxon>Paraburkholderia</taxon>
    </lineage>
</organism>
<keyword id="KW-0240">DNA-directed RNA polymerase</keyword>
<keyword id="KW-0460">Magnesium</keyword>
<keyword id="KW-0479">Metal-binding</keyword>
<keyword id="KW-0548">Nucleotidyltransferase</keyword>
<keyword id="KW-0804">Transcription</keyword>
<keyword id="KW-0808">Transferase</keyword>
<keyword id="KW-0862">Zinc</keyword>
<accession>B2T758</accession>
<name>RPOC_PARPJ</name>
<comment type="function">
    <text evidence="1">DNA-dependent RNA polymerase catalyzes the transcription of DNA into RNA using the four ribonucleoside triphosphates as substrates.</text>
</comment>
<comment type="catalytic activity">
    <reaction evidence="1">
        <text>RNA(n) + a ribonucleoside 5'-triphosphate = RNA(n+1) + diphosphate</text>
        <dbReference type="Rhea" id="RHEA:21248"/>
        <dbReference type="Rhea" id="RHEA-COMP:14527"/>
        <dbReference type="Rhea" id="RHEA-COMP:17342"/>
        <dbReference type="ChEBI" id="CHEBI:33019"/>
        <dbReference type="ChEBI" id="CHEBI:61557"/>
        <dbReference type="ChEBI" id="CHEBI:140395"/>
        <dbReference type="EC" id="2.7.7.6"/>
    </reaction>
</comment>
<comment type="cofactor">
    <cofactor evidence="1">
        <name>Mg(2+)</name>
        <dbReference type="ChEBI" id="CHEBI:18420"/>
    </cofactor>
    <text evidence="1">Binds 1 Mg(2+) ion per subunit.</text>
</comment>
<comment type="cofactor">
    <cofactor evidence="1">
        <name>Zn(2+)</name>
        <dbReference type="ChEBI" id="CHEBI:29105"/>
    </cofactor>
    <text evidence="1">Binds 2 Zn(2+) ions per subunit.</text>
</comment>
<comment type="subunit">
    <text evidence="1">The RNAP catalytic core consists of 2 alpha, 1 beta, 1 beta' and 1 omega subunit. When a sigma factor is associated with the core the holoenzyme is formed, which can initiate transcription.</text>
</comment>
<comment type="similarity">
    <text evidence="1">Belongs to the RNA polymerase beta' chain family.</text>
</comment>
<dbReference type="EC" id="2.7.7.6" evidence="1"/>
<dbReference type="EMBL" id="CP001052">
    <property type="protein sequence ID" value="ACD18041.1"/>
    <property type="molecule type" value="Genomic_DNA"/>
</dbReference>
<dbReference type="RefSeq" id="WP_012434576.1">
    <property type="nucleotide sequence ID" value="NC_010681.1"/>
</dbReference>
<dbReference type="SMR" id="B2T758"/>
<dbReference type="STRING" id="398527.Bphyt_3651"/>
<dbReference type="KEGG" id="bpy:Bphyt_3651"/>
<dbReference type="eggNOG" id="COG0086">
    <property type="taxonomic scope" value="Bacteria"/>
</dbReference>
<dbReference type="HOGENOM" id="CLU_000524_3_1_4"/>
<dbReference type="OrthoDB" id="9815296at2"/>
<dbReference type="Proteomes" id="UP000001739">
    <property type="component" value="Chromosome 1"/>
</dbReference>
<dbReference type="GO" id="GO:0000428">
    <property type="term" value="C:DNA-directed RNA polymerase complex"/>
    <property type="evidence" value="ECO:0007669"/>
    <property type="project" value="UniProtKB-KW"/>
</dbReference>
<dbReference type="GO" id="GO:0003677">
    <property type="term" value="F:DNA binding"/>
    <property type="evidence" value="ECO:0007669"/>
    <property type="project" value="UniProtKB-UniRule"/>
</dbReference>
<dbReference type="GO" id="GO:0003899">
    <property type="term" value="F:DNA-directed RNA polymerase activity"/>
    <property type="evidence" value="ECO:0007669"/>
    <property type="project" value="UniProtKB-UniRule"/>
</dbReference>
<dbReference type="GO" id="GO:0000287">
    <property type="term" value="F:magnesium ion binding"/>
    <property type="evidence" value="ECO:0007669"/>
    <property type="project" value="UniProtKB-UniRule"/>
</dbReference>
<dbReference type="GO" id="GO:0008270">
    <property type="term" value="F:zinc ion binding"/>
    <property type="evidence" value="ECO:0007669"/>
    <property type="project" value="UniProtKB-UniRule"/>
</dbReference>
<dbReference type="GO" id="GO:0006351">
    <property type="term" value="P:DNA-templated transcription"/>
    <property type="evidence" value="ECO:0007669"/>
    <property type="project" value="UniProtKB-UniRule"/>
</dbReference>
<dbReference type="CDD" id="cd02655">
    <property type="entry name" value="RNAP_beta'_C"/>
    <property type="match status" value="1"/>
</dbReference>
<dbReference type="CDD" id="cd01609">
    <property type="entry name" value="RNAP_beta'_N"/>
    <property type="match status" value="1"/>
</dbReference>
<dbReference type="FunFam" id="1.10.132.30:FF:000003">
    <property type="entry name" value="DNA-directed RNA polymerase subunit beta"/>
    <property type="match status" value="1"/>
</dbReference>
<dbReference type="FunFam" id="1.10.150.390:FF:000002">
    <property type="entry name" value="DNA-directed RNA polymerase subunit beta"/>
    <property type="match status" value="1"/>
</dbReference>
<dbReference type="FunFam" id="4.10.860.120:FF:000001">
    <property type="entry name" value="DNA-directed RNA polymerase subunit beta"/>
    <property type="match status" value="1"/>
</dbReference>
<dbReference type="Gene3D" id="1.10.132.30">
    <property type="match status" value="1"/>
</dbReference>
<dbReference type="Gene3D" id="1.10.150.390">
    <property type="match status" value="1"/>
</dbReference>
<dbReference type="Gene3D" id="1.10.1790.20">
    <property type="match status" value="1"/>
</dbReference>
<dbReference type="Gene3D" id="1.10.40.90">
    <property type="match status" value="1"/>
</dbReference>
<dbReference type="Gene3D" id="2.40.40.20">
    <property type="match status" value="1"/>
</dbReference>
<dbReference type="Gene3D" id="2.40.50.100">
    <property type="match status" value="3"/>
</dbReference>
<dbReference type="Gene3D" id="4.10.860.120">
    <property type="entry name" value="RNA polymerase II, clamp domain"/>
    <property type="match status" value="1"/>
</dbReference>
<dbReference type="Gene3D" id="1.10.274.100">
    <property type="entry name" value="RNA polymerase Rpb1, domain 3"/>
    <property type="match status" value="1"/>
</dbReference>
<dbReference type="HAMAP" id="MF_01322">
    <property type="entry name" value="RNApol_bact_RpoC"/>
    <property type="match status" value="1"/>
</dbReference>
<dbReference type="InterPro" id="IPR045867">
    <property type="entry name" value="DNA-dir_RpoC_beta_prime"/>
</dbReference>
<dbReference type="InterPro" id="IPR012754">
    <property type="entry name" value="DNA-dir_RpoC_beta_prime_bact"/>
</dbReference>
<dbReference type="InterPro" id="IPR000722">
    <property type="entry name" value="RNA_pol_asu"/>
</dbReference>
<dbReference type="InterPro" id="IPR006592">
    <property type="entry name" value="RNA_pol_N"/>
</dbReference>
<dbReference type="InterPro" id="IPR007080">
    <property type="entry name" value="RNA_pol_Rpb1_1"/>
</dbReference>
<dbReference type="InterPro" id="IPR007066">
    <property type="entry name" value="RNA_pol_Rpb1_3"/>
</dbReference>
<dbReference type="InterPro" id="IPR042102">
    <property type="entry name" value="RNA_pol_Rpb1_3_sf"/>
</dbReference>
<dbReference type="InterPro" id="IPR007083">
    <property type="entry name" value="RNA_pol_Rpb1_4"/>
</dbReference>
<dbReference type="InterPro" id="IPR007081">
    <property type="entry name" value="RNA_pol_Rpb1_5"/>
</dbReference>
<dbReference type="InterPro" id="IPR044893">
    <property type="entry name" value="RNA_pol_Rpb1_clamp_domain"/>
</dbReference>
<dbReference type="InterPro" id="IPR038120">
    <property type="entry name" value="Rpb1_funnel_sf"/>
</dbReference>
<dbReference type="NCBIfam" id="TIGR02386">
    <property type="entry name" value="rpoC_TIGR"/>
    <property type="match status" value="1"/>
</dbReference>
<dbReference type="PANTHER" id="PTHR19376">
    <property type="entry name" value="DNA-DIRECTED RNA POLYMERASE"/>
    <property type="match status" value="1"/>
</dbReference>
<dbReference type="PANTHER" id="PTHR19376:SF54">
    <property type="entry name" value="DNA-DIRECTED RNA POLYMERASE SUBUNIT BETA"/>
    <property type="match status" value="1"/>
</dbReference>
<dbReference type="Pfam" id="PF04997">
    <property type="entry name" value="RNA_pol_Rpb1_1"/>
    <property type="match status" value="1"/>
</dbReference>
<dbReference type="Pfam" id="PF00623">
    <property type="entry name" value="RNA_pol_Rpb1_2"/>
    <property type="match status" value="2"/>
</dbReference>
<dbReference type="Pfam" id="PF04983">
    <property type="entry name" value="RNA_pol_Rpb1_3"/>
    <property type="match status" value="1"/>
</dbReference>
<dbReference type="Pfam" id="PF05000">
    <property type="entry name" value="RNA_pol_Rpb1_4"/>
    <property type="match status" value="1"/>
</dbReference>
<dbReference type="Pfam" id="PF04998">
    <property type="entry name" value="RNA_pol_Rpb1_5"/>
    <property type="match status" value="1"/>
</dbReference>
<dbReference type="SMART" id="SM00663">
    <property type="entry name" value="RPOLA_N"/>
    <property type="match status" value="1"/>
</dbReference>
<dbReference type="SUPFAM" id="SSF64484">
    <property type="entry name" value="beta and beta-prime subunits of DNA dependent RNA-polymerase"/>
    <property type="match status" value="1"/>
</dbReference>
<sequence>MKALLDLFKQVQQPEVFDAIKIGLASPDKIRSWSFGEVKKPETINYRTFKPERDGLFCAKIFGPIKDYECLCGKYKRLKHRGVICEKCGVEVTLAKVRRERMGHIELASPVAHIWFLKSLPSRLGMVLDMTLRDIERVLYFEAYVVIDPGMTPLKARQIMTEEDYYNKVEEYGDEFRAEMGAEGVRELLRAINIDEQVEMLRTELKNTGSEAKIKKYAKRLKVLEAFQRSGIKPDWMVLEVLPVLPPELRPLVPLDGGRFATSDLNDLYRRVINRNNRLKRLLELKAPEIIVRNEKRMLQEAVDSLLDNGRRGKAMTGANKRPLKSLADMIKGKGGRFRQNLLGKRVDYSGRSVIVVGPTLKLHQCGLPKLMALELFKPFIFNKLEVMGVATTIKAAKKEVENQTPVVWDILEEVIREHPVMLNRAPTLHRLGIQAFEPVLIEGKAIQLHPLVCAAFNADFDGDQMAVHVPLSLEAQMEARTLMLASNNVLFPANGDPSIVPSQDIVLGLYYATREAVNAKGEGLTFTGVSEALRAYENKEVELASRVNVRITEMVHNEDKSEGAPAFVPKITLYPTTVGRAILSEILPPGLPFSVLNKPLKKKEISRLINTAFRKCGLRETVIFADQLMQSGFRLATRAGISICVDDMLVPPQKETIVGDAAKKVKEYDRQYMSGLVTSQERYNNVVDIWSATSEAVGKAMMEQLSTEPVTDRDGNETRQESFNSIYMMADSGARGSAVQIRQLAGMRGLMAKPDGSIIETPITANFREGLNVLQYFISTHGARKGLADTALKTANSGYLTRRLVDVTQDLVVVEDDCGTSNGVAMKALVEGGEVVEALRDRILGRVTVADVVNPESQETLYETGTLLDEDAVEEIERLGIDEVRVRTPLTCETRYGLCAACYGRDLGRGSSVNVGEAVGVIAAQSIGEPGTQLTMRTFHIGGAASRAAVASSVEAKSNGTVRFTATMRYVTNAKGEQIVISRSGEAMITDDHGRERERHKVPYGATLLQLDGAQIKAGTQLATWDPMTRPIITEWGGTVKFENVEEGVTVAKQIDDVTGLSTLVVIDVKRRGSQASKTVRPQVKLLDANGEEVKIPNTEHSVQIGFQVGALITVKDGQQVQVGEVLARIPVESQKTRDITGGLPRVAELFEARSPKDAGILAEVTGTTSFGKDTKGKQRLVITDLDGNQHEFLIAKEKQVLVHDGQVVNKGEMIVDGPADPHDILRLQGIEALSRYIVDEVQDVYRLQGVKINDKHIEVIVRQMLRRVQITDNGDTRFIPGEQVERSDMLDENDRMIAEDKRPATYENVLLGITKASLSTDSFISAASFQETTRVLTEAAIMGKRDDLRGLKENVIVGRLIPAGTGLAFHKARKSKELSDRERFDQIAAEESFEFGTPETPAAEQQHSGE</sequence>
<proteinExistence type="inferred from homology"/>
<protein>
    <recommendedName>
        <fullName evidence="1">DNA-directed RNA polymerase subunit beta'</fullName>
        <shortName evidence="1">RNAP subunit beta'</shortName>
        <ecNumber evidence="1">2.7.7.6</ecNumber>
    </recommendedName>
    <alternativeName>
        <fullName evidence="1">RNA polymerase subunit beta'</fullName>
    </alternativeName>
    <alternativeName>
        <fullName evidence="1">Transcriptase subunit beta'</fullName>
    </alternativeName>
</protein>
<gene>
    <name evidence="1" type="primary">rpoC</name>
    <name type="ordered locus">Bphyt_3651</name>
</gene>
<evidence type="ECO:0000255" key="1">
    <source>
        <dbReference type="HAMAP-Rule" id="MF_01322"/>
    </source>
</evidence>
<evidence type="ECO:0000256" key="2">
    <source>
        <dbReference type="SAM" id="MobiDB-lite"/>
    </source>
</evidence>